<feature type="chain" id="PRO_1000118529" description="tRNA dimethylallyltransferase">
    <location>
        <begin position="1"/>
        <end position="316"/>
    </location>
</feature>
<feature type="region of interest" description="Interaction with substrate tRNA" evidence="1">
    <location>
        <begin position="42"/>
        <end position="45"/>
    </location>
</feature>
<feature type="region of interest" description="Interaction with substrate tRNA" evidence="1">
    <location>
        <begin position="166"/>
        <end position="170"/>
    </location>
</feature>
<feature type="region of interest" description="Interaction with substrate tRNA" evidence="1">
    <location>
        <begin position="247"/>
        <end position="252"/>
    </location>
</feature>
<feature type="region of interest" description="Interaction with substrate tRNA" evidence="1">
    <location>
        <begin position="280"/>
        <end position="287"/>
    </location>
</feature>
<feature type="binding site" evidence="1">
    <location>
        <begin position="17"/>
        <end position="24"/>
    </location>
    <ligand>
        <name>ATP</name>
        <dbReference type="ChEBI" id="CHEBI:30616"/>
    </ligand>
</feature>
<feature type="binding site" evidence="1">
    <location>
        <begin position="19"/>
        <end position="24"/>
    </location>
    <ligand>
        <name>substrate</name>
    </ligand>
</feature>
<feature type="site" description="Interaction with substrate tRNA" evidence="1">
    <location>
        <position position="108"/>
    </location>
</feature>
<feature type="site" description="Interaction with substrate tRNA" evidence="1">
    <location>
        <position position="130"/>
    </location>
</feature>
<proteinExistence type="inferred from homology"/>
<protein>
    <recommendedName>
        <fullName evidence="1">tRNA dimethylallyltransferase</fullName>
        <ecNumber evidence="1">2.5.1.75</ecNumber>
    </recommendedName>
    <alternativeName>
        <fullName evidence="1">Dimethylallyl diphosphate:tRNA dimethylallyltransferase</fullName>
        <shortName evidence="1">DMAPP:tRNA dimethylallyltransferase</shortName>
        <shortName evidence="1">DMATase</shortName>
    </alternativeName>
    <alternativeName>
        <fullName evidence="1">Isopentenyl-diphosphate:tRNA isopentenyltransferase</fullName>
        <shortName evidence="1">IPP transferase</shortName>
        <shortName evidence="1">IPPT</shortName>
        <shortName evidence="1">IPTase</shortName>
    </alternativeName>
</protein>
<name>MIAA_ESCF3</name>
<dbReference type="EC" id="2.5.1.75" evidence="1"/>
<dbReference type="EMBL" id="CU928158">
    <property type="protein sequence ID" value="CAQ91643.1"/>
    <property type="molecule type" value="Genomic_DNA"/>
</dbReference>
<dbReference type="RefSeq" id="WP_001280339.1">
    <property type="nucleotide sequence ID" value="NC_011740.1"/>
</dbReference>
<dbReference type="SMR" id="B7LLV3"/>
<dbReference type="GeneID" id="75169691"/>
<dbReference type="KEGG" id="efe:EFER_4224"/>
<dbReference type="HOGENOM" id="CLU_032616_0_0_6"/>
<dbReference type="OrthoDB" id="9776390at2"/>
<dbReference type="Proteomes" id="UP000000745">
    <property type="component" value="Chromosome"/>
</dbReference>
<dbReference type="GO" id="GO:0005524">
    <property type="term" value="F:ATP binding"/>
    <property type="evidence" value="ECO:0007669"/>
    <property type="project" value="UniProtKB-UniRule"/>
</dbReference>
<dbReference type="GO" id="GO:0052381">
    <property type="term" value="F:tRNA dimethylallyltransferase activity"/>
    <property type="evidence" value="ECO:0007669"/>
    <property type="project" value="UniProtKB-UniRule"/>
</dbReference>
<dbReference type="GO" id="GO:0006400">
    <property type="term" value="P:tRNA modification"/>
    <property type="evidence" value="ECO:0007669"/>
    <property type="project" value="TreeGrafter"/>
</dbReference>
<dbReference type="FunFam" id="1.10.20.140:FF:000001">
    <property type="entry name" value="tRNA dimethylallyltransferase"/>
    <property type="match status" value="1"/>
</dbReference>
<dbReference type="FunFam" id="1.10.287.890:FF:000001">
    <property type="entry name" value="tRNA dimethylallyltransferase"/>
    <property type="match status" value="1"/>
</dbReference>
<dbReference type="Gene3D" id="1.10.20.140">
    <property type="match status" value="1"/>
</dbReference>
<dbReference type="Gene3D" id="1.10.287.890">
    <property type="entry name" value="Crystal structure of tRNA isopentenylpyrophosphate transferase (bh2366) domain"/>
    <property type="match status" value="1"/>
</dbReference>
<dbReference type="Gene3D" id="3.40.50.300">
    <property type="entry name" value="P-loop containing nucleotide triphosphate hydrolases"/>
    <property type="match status" value="1"/>
</dbReference>
<dbReference type="HAMAP" id="MF_00185">
    <property type="entry name" value="IPP_trans"/>
    <property type="match status" value="1"/>
</dbReference>
<dbReference type="InterPro" id="IPR039657">
    <property type="entry name" value="Dimethylallyltransferase"/>
</dbReference>
<dbReference type="InterPro" id="IPR018022">
    <property type="entry name" value="IPT"/>
</dbReference>
<dbReference type="InterPro" id="IPR027417">
    <property type="entry name" value="P-loop_NTPase"/>
</dbReference>
<dbReference type="NCBIfam" id="TIGR00174">
    <property type="entry name" value="miaA"/>
    <property type="match status" value="1"/>
</dbReference>
<dbReference type="PANTHER" id="PTHR11088">
    <property type="entry name" value="TRNA DIMETHYLALLYLTRANSFERASE"/>
    <property type="match status" value="1"/>
</dbReference>
<dbReference type="PANTHER" id="PTHR11088:SF60">
    <property type="entry name" value="TRNA DIMETHYLALLYLTRANSFERASE"/>
    <property type="match status" value="1"/>
</dbReference>
<dbReference type="Pfam" id="PF01715">
    <property type="entry name" value="IPPT"/>
    <property type="match status" value="1"/>
</dbReference>
<dbReference type="SUPFAM" id="SSF52540">
    <property type="entry name" value="P-loop containing nucleoside triphosphate hydrolases"/>
    <property type="match status" value="1"/>
</dbReference>
<accession>B7LLV3</accession>
<reference key="1">
    <citation type="journal article" date="2009" name="PLoS Genet.">
        <title>Organised genome dynamics in the Escherichia coli species results in highly diverse adaptive paths.</title>
        <authorList>
            <person name="Touchon M."/>
            <person name="Hoede C."/>
            <person name="Tenaillon O."/>
            <person name="Barbe V."/>
            <person name="Baeriswyl S."/>
            <person name="Bidet P."/>
            <person name="Bingen E."/>
            <person name="Bonacorsi S."/>
            <person name="Bouchier C."/>
            <person name="Bouvet O."/>
            <person name="Calteau A."/>
            <person name="Chiapello H."/>
            <person name="Clermont O."/>
            <person name="Cruveiller S."/>
            <person name="Danchin A."/>
            <person name="Diard M."/>
            <person name="Dossat C."/>
            <person name="Karoui M.E."/>
            <person name="Frapy E."/>
            <person name="Garry L."/>
            <person name="Ghigo J.M."/>
            <person name="Gilles A.M."/>
            <person name="Johnson J."/>
            <person name="Le Bouguenec C."/>
            <person name="Lescat M."/>
            <person name="Mangenot S."/>
            <person name="Martinez-Jehanne V."/>
            <person name="Matic I."/>
            <person name="Nassif X."/>
            <person name="Oztas S."/>
            <person name="Petit M.A."/>
            <person name="Pichon C."/>
            <person name="Rouy Z."/>
            <person name="Ruf C.S."/>
            <person name="Schneider D."/>
            <person name="Tourret J."/>
            <person name="Vacherie B."/>
            <person name="Vallenet D."/>
            <person name="Medigue C."/>
            <person name="Rocha E.P.C."/>
            <person name="Denamur E."/>
        </authorList>
    </citation>
    <scope>NUCLEOTIDE SEQUENCE [LARGE SCALE GENOMIC DNA]</scope>
    <source>
        <strain>ATCC 35469 / DSM 13698 / BCRC 15582 / CCUG 18766 / IAM 14443 / JCM 21226 / LMG 7866 / NBRC 102419 / NCTC 12128 / CDC 0568-73</strain>
    </source>
</reference>
<organism>
    <name type="scientific">Escherichia fergusonii (strain ATCC 35469 / DSM 13698 / CCUG 18766 / IAM 14443 / JCM 21226 / LMG 7866 / NBRC 102419 / NCTC 12128 / CDC 0568-73)</name>
    <dbReference type="NCBI Taxonomy" id="585054"/>
    <lineage>
        <taxon>Bacteria</taxon>
        <taxon>Pseudomonadati</taxon>
        <taxon>Pseudomonadota</taxon>
        <taxon>Gammaproteobacteria</taxon>
        <taxon>Enterobacterales</taxon>
        <taxon>Enterobacteriaceae</taxon>
        <taxon>Escherichia</taxon>
    </lineage>
</organism>
<evidence type="ECO:0000255" key="1">
    <source>
        <dbReference type="HAMAP-Rule" id="MF_00185"/>
    </source>
</evidence>
<keyword id="KW-0067">ATP-binding</keyword>
<keyword id="KW-0460">Magnesium</keyword>
<keyword id="KW-0547">Nucleotide-binding</keyword>
<keyword id="KW-0808">Transferase</keyword>
<keyword id="KW-0819">tRNA processing</keyword>
<gene>
    <name evidence="1" type="primary">miaA</name>
    <name type="ordered locus">EFER_4224</name>
</gene>
<comment type="function">
    <text evidence="1">Catalyzes the transfer of a dimethylallyl group onto the adenine at position 37 in tRNAs that read codons beginning with uridine, leading to the formation of N6-(dimethylallyl)adenosine (i(6)A).</text>
</comment>
<comment type="catalytic activity">
    <reaction evidence="1">
        <text>adenosine(37) in tRNA + dimethylallyl diphosphate = N(6)-dimethylallyladenosine(37) in tRNA + diphosphate</text>
        <dbReference type="Rhea" id="RHEA:26482"/>
        <dbReference type="Rhea" id="RHEA-COMP:10162"/>
        <dbReference type="Rhea" id="RHEA-COMP:10375"/>
        <dbReference type="ChEBI" id="CHEBI:33019"/>
        <dbReference type="ChEBI" id="CHEBI:57623"/>
        <dbReference type="ChEBI" id="CHEBI:74411"/>
        <dbReference type="ChEBI" id="CHEBI:74415"/>
        <dbReference type="EC" id="2.5.1.75"/>
    </reaction>
</comment>
<comment type="cofactor">
    <cofactor evidence="1">
        <name>Mg(2+)</name>
        <dbReference type="ChEBI" id="CHEBI:18420"/>
    </cofactor>
</comment>
<comment type="subunit">
    <text evidence="1">Monomer.</text>
</comment>
<comment type="similarity">
    <text evidence="1">Belongs to the IPP transferase family.</text>
</comment>
<sequence length="316" mass="35079">MSDISKASLPKAIFLMGPTASGKTALAIELRKILPVELISVDSALIYKGMDIGTAKPNAEELLAAPHRLLDIRDPSQAYSAADFRRDALAEMADITAAGRIPLLVGGTMLYFKALLEGLSPLPSADPEVRARIEQQAAEQGWESLHRQLQEIDPVAAARIHPNDPQRLSRALEVFFISGKTLTELTQTSGDALPYQVHQFAIAPASRELLHQRIEQRFHQMLASGFEAEVRALFARGDLHTDLPSIRCVGYRQMWSYLEGEISYDEMVYRGVCATRQLAKRQITWLRGWEGVHWLDSEKPEQARDEVLQVVGAIAG</sequence>